<sequence length="383" mass="43575">MDIAKKFISEIDDKLESKSEFDKELEKIKSSFNEEYEKWSSGKQRGSSSKHGNQSTHGDSSPTRNSSGSSKKGRPKANRVETSSELPDHLIRGFINEKLFLKNFLLKQKESEEFKTLAIVGKYGVGKTTLCQAVFNDEDVKQVYFPRIWVSMYSKETKEDEDPKIDVVKRILRSLGVEDEMFKHIKTEAEEEKSIKDEAGEREEETVKEKELARLLYALHLNLIGKKYLIVLDDVWEDNEWDQRLDDEKKQQEKSHLSCGFPKGFGGKVIMTSRDERLAKAIVGEEENLQRLFPRSDAESLWEIYIDAVPTKVDDAAATNLGDAVATNAGDAVAPKVNPRYPGRYKQELMDKSCGIPLAARMLAKIEPVKVDEIGNIDRKQSF</sequence>
<keyword id="KW-0067">ATP-binding</keyword>
<keyword id="KW-0547">Nucleotide-binding</keyword>
<keyword id="KW-0611">Plant defense</keyword>
<keyword id="KW-1185">Reference proteome</keyword>
<keyword id="KW-0677">Repeat</keyword>
<reference key="1">
    <citation type="journal article" date="1999" name="Nature">
        <title>Sequence and analysis of chromosome 4 of the plant Arabidopsis thaliana.</title>
        <authorList>
            <person name="Mayer K.F.X."/>
            <person name="Schueller C."/>
            <person name="Wambutt R."/>
            <person name="Murphy G."/>
            <person name="Volckaert G."/>
            <person name="Pohl T."/>
            <person name="Duesterhoeft A."/>
            <person name="Stiekema W."/>
            <person name="Entian K.-D."/>
            <person name="Terryn N."/>
            <person name="Harris B."/>
            <person name="Ansorge W."/>
            <person name="Brandt P."/>
            <person name="Grivell L.A."/>
            <person name="Rieger M."/>
            <person name="Weichselgartner M."/>
            <person name="de Simone V."/>
            <person name="Obermaier B."/>
            <person name="Mache R."/>
            <person name="Mueller M."/>
            <person name="Kreis M."/>
            <person name="Delseny M."/>
            <person name="Puigdomenech P."/>
            <person name="Watson M."/>
            <person name="Schmidtheini T."/>
            <person name="Reichert B."/>
            <person name="Portetelle D."/>
            <person name="Perez-Alonso M."/>
            <person name="Boutry M."/>
            <person name="Bancroft I."/>
            <person name="Vos P."/>
            <person name="Hoheisel J."/>
            <person name="Zimmermann W."/>
            <person name="Wedler H."/>
            <person name="Ridley P."/>
            <person name="Langham S.-A."/>
            <person name="McCullagh B."/>
            <person name="Bilham L."/>
            <person name="Robben J."/>
            <person name="van der Schueren J."/>
            <person name="Grymonprez B."/>
            <person name="Chuang Y.-J."/>
            <person name="Vandenbussche F."/>
            <person name="Braeken M."/>
            <person name="Weltjens I."/>
            <person name="Voet M."/>
            <person name="Bastiaens I."/>
            <person name="Aert R."/>
            <person name="Defoor E."/>
            <person name="Weitzenegger T."/>
            <person name="Bothe G."/>
            <person name="Ramsperger U."/>
            <person name="Hilbert H."/>
            <person name="Braun M."/>
            <person name="Holzer E."/>
            <person name="Brandt A."/>
            <person name="Peters S."/>
            <person name="van Staveren M."/>
            <person name="Dirkse W."/>
            <person name="Mooijman P."/>
            <person name="Klein Lankhorst R."/>
            <person name="Rose M."/>
            <person name="Hauf J."/>
            <person name="Koetter P."/>
            <person name="Berneiser S."/>
            <person name="Hempel S."/>
            <person name="Feldpausch M."/>
            <person name="Lamberth S."/>
            <person name="Van den Daele H."/>
            <person name="De Keyser A."/>
            <person name="Buysshaert C."/>
            <person name="Gielen J."/>
            <person name="Villarroel R."/>
            <person name="De Clercq R."/>
            <person name="van Montagu M."/>
            <person name="Rogers J."/>
            <person name="Cronin A."/>
            <person name="Quail M.A."/>
            <person name="Bray-Allen S."/>
            <person name="Clark L."/>
            <person name="Doggett J."/>
            <person name="Hall S."/>
            <person name="Kay M."/>
            <person name="Lennard N."/>
            <person name="McLay K."/>
            <person name="Mayes R."/>
            <person name="Pettett A."/>
            <person name="Rajandream M.A."/>
            <person name="Lyne M."/>
            <person name="Benes V."/>
            <person name="Rechmann S."/>
            <person name="Borkova D."/>
            <person name="Bloecker H."/>
            <person name="Scharfe M."/>
            <person name="Grimm M."/>
            <person name="Loehnert T.-H."/>
            <person name="Dose S."/>
            <person name="de Haan M."/>
            <person name="Maarse A.C."/>
            <person name="Schaefer M."/>
            <person name="Mueller-Auer S."/>
            <person name="Gabel C."/>
            <person name="Fuchs M."/>
            <person name="Fartmann B."/>
            <person name="Granderath K."/>
            <person name="Dauner D."/>
            <person name="Herzl A."/>
            <person name="Neumann S."/>
            <person name="Argiriou A."/>
            <person name="Vitale D."/>
            <person name="Liguori R."/>
            <person name="Piravandi E."/>
            <person name="Massenet O."/>
            <person name="Quigley F."/>
            <person name="Clabauld G."/>
            <person name="Muendlein A."/>
            <person name="Felber R."/>
            <person name="Schnabl S."/>
            <person name="Hiller R."/>
            <person name="Schmidt W."/>
            <person name="Lecharny A."/>
            <person name="Aubourg S."/>
            <person name="Chefdor F."/>
            <person name="Cooke R."/>
            <person name="Berger C."/>
            <person name="Monfort A."/>
            <person name="Casacuberta E."/>
            <person name="Gibbons T."/>
            <person name="Weber N."/>
            <person name="Vandenbol M."/>
            <person name="Bargues M."/>
            <person name="Terol J."/>
            <person name="Torres A."/>
            <person name="Perez-Perez A."/>
            <person name="Purnelle B."/>
            <person name="Bent E."/>
            <person name="Johnson S."/>
            <person name="Tacon D."/>
            <person name="Jesse T."/>
            <person name="Heijnen L."/>
            <person name="Schwarz S."/>
            <person name="Scholler P."/>
            <person name="Heber S."/>
            <person name="Francs P."/>
            <person name="Bielke C."/>
            <person name="Frishman D."/>
            <person name="Haase D."/>
            <person name="Lemcke K."/>
            <person name="Mewes H.-W."/>
            <person name="Stocker S."/>
            <person name="Zaccaria P."/>
            <person name="Bevan M."/>
            <person name="Wilson R.K."/>
            <person name="de la Bastide M."/>
            <person name="Habermann K."/>
            <person name="Parnell L."/>
            <person name="Dedhia N."/>
            <person name="Gnoj L."/>
            <person name="Schutz K."/>
            <person name="Huang E."/>
            <person name="Spiegel L."/>
            <person name="Sekhon M."/>
            <person name="Murray J."/>
            <person name="Sheet P."/>
            <person name="Cordes M."/>
            <person name="Abu-Threideh J."/>
            <person name="Stoneking T."/>
            <person name="Kalicki J."/>
            <person name="Graves T."/>
            <person name="Harmon G."/>
            <person name="Edwards J."/>
            <person name="Latreille P."/>
            <person name="Courtney L."/>
            <person name="Cloud J."/>
            <person name="Abbott A."/>
            <person name="Scott K."/>
            <person name="Johnson D."/>
            <person name="Minx P."/>
            <person name="Bentley D."/>
            <person name="Fulton B."/>
            <person name="Miller N."/>
            <person name="Greco T."/>
            <person name="Kemp K."/>
            <person name="Kramer J."/>
            <person name="Fulton L."/>
            <person name="Mardis E."/>
            <person name="Dante M."/>
            <person name="Pepin K."/>
            <person name="Hillier L.W."/>
            <person name="Nelson J."/>
            <person name="Spieth J."/>
            <person name="Ryan E."/>
            <person name="Andrews S."/>
            <person name="Geisel C."/>
            <person name="Layman D."/>
            <person name="Du H."/>
            <person name="Ali J."/>
            <person name="Berghoff A."/>
            <person name="Jones K."/>
            <person name="Drone K."/>
            <person name="Cotton M."/>
            <person name="Joshu C."/>
            <person name="Antonoiu B."/>
            <person name="Zidanic M."/>
            <person name="Strong C."/>
            <person name="Sun H."/>
            <person name="Lamar B."/>
            <person name="Yordan C."/>
            <person name="Ma P."/>
            <person name="Zhong J."/>
            <person name="Preston R."/>
            <person name="Vil D."/>
            <person name="Shekher M."/>
            <person name="Matero A."/>
            <person name="Shah R."/>
            <person name="Swaby I.K."/>
            <person name="O'Shaughnessy A."/>
            <person name="Rodriguez M."/>
            <person name="Hoffman J."/>
            <person name="Till S."/>
            <person name="Granat S."/>
            <person name="Shohdy N."/>
            <person name="Hasegawa A."/>
            <person name="Hameed A."/>
            <person name="Lodhi M."/>
            <person name="Johnson A."/>
            <person name="Chen E."/>
            <person name="Marra M.A."/>
            <person name="Martienssen R."/>
            <person name="McCombie W.R."/>
        </authorList>
    </citation>
    <scope>NUCLEOTIDE SEQUENCE [LARGE SCALE GENOMIC DNA]</scope>
    <source>
        <strain>cv. Columbia</strain>
    </source>
</reference>
<reference key="2">
    <citation type="journal article" date="2017" name="Plant J.">
        <title>Araport11: a complete reannotation of the Arabidopsis thaliana reference genome.</title>
        <authorList>
            <person name="Cheng C.Y."/>
            <person name="Krishnakumar V."/>
            <person name="Chan A.P."/>
            <person name="Thibaud-Nissen F."/>
            <person name="Schobel S."/>
            <person name="Town C.D."/>
        </authorList>
    </citation>
    <scope>GENOME REANNOTATION</scope>
    <source>
        <strain>cv. Columbia</strain>
    </source>
</reference>
<reference key="3">
    <citation type="journal article" date="2003" name="Science">
        <title>Empirical analysis of transcriptional activity in the Arabidopsis genome.</title>
        <authorList>
            <person name="Yamada K."/>
            <person name="Lim J."/>
            <person name="Dale J.M."/>
            <person name="Chen H."/>
            <person name="Shinn P."/>
            <person name="Palm C.J."/>
            <person name="Southwick A.M."/>
            <person name="Wu H.C."/>
            <person name="Kim C.J."/>
            <person name="Nguyen M."/>
            <person name="Pham P.K."/>
            <person name="Cheuk R.F."/>
            <person name="Karlin-Newmann G."/>
            <person name="Liu S.X."/>
            <person name="Lam B."/>
            <person name="Sakano H."/>
            <person name="Wu T."/>
            <person name="Yu G."/>
            <person name="Miranda M."/>
            <person name="Quach H.L."/>
            <person name="Tripp M."/>
            <person name="Chang C.H."/>
            <person name="Lee J.M."/>
            <person name="Toriumi M.J."/>
            <person name="Chan M.M."/>
            <person name="Tang C.C."/>
            <person name="Onodera C.S."/>
            <person name="Deng J.M."/>
            <person name="Akiyama K."/>
            <person name="Ansari Y."/>
            <person name="Arakawa T."/>
            <person name="Banh J."/>
            <person name="Banno F."/>
            <person name="Bowser L."/>
            <person name="Brooks S.Y."/>
            <person name="Carninci P."/>
            <person name="Chao Q."/>
            <person name="Choy N."/>
            <person name="Enju A."/>
            <person name="Goldsmith A.D."/>
            <person name="Gurjal M."/>
            <person name="Hansen N.F."/>
            <person name="Hayashizaki Y."/>
            <person name="Johnson-Hopson C."/>
            <person name="Hsuan V.W."/>
            <person name="Iida K."/>
            <person name="Karnes M."/>
            <person name="Khan S."/>
            <person name="Koesema E."/>
            <person name="Ishida J."/>
            <person name="Jiang P.X."/>
            <person name="Jones T."/>
            <person name="Kawai J."/>
            <person name="Kamiya A."/>
            <person name="Meyers C."/>
            <person name="Nakajima M."/>
            <person name="Narusaka M."/>
            <person name="Seki M."/>
            <person name="Sakurai T."/>
            <person name="Satou M."/>
            <person name="Tamse R."/>
            <person name="Vaysberg M."/>
            <person name="Wallender E.K."/>
            <person name="Wong C."/>
            <person name="Yamamura Y."/>
            <person name="Yuan S."/>
            <person name="Shinozaki K."/>
            <person name="Davis R.W."/>
            <person name="Theologis A."/>
            <person name="Ecker J.R."/>
        </authorList>
    </citation>
    <scope>NUCLEOTIDE SEQUENCE [LARGE SCALE MRNA]</scope>
    <source>
        <strain>cv. Columbia</strain>
    </source>
</reference>
<accession>Q84WD3</accession>
<accession>O50063</accession>
<dbReference type="EMBL" id="AL021711">
    <property type="protein sequence ID" value="CAA16764.1"/>
    <property type="molecule type" value="Genomic_DNA"/>
</dbReference>
<dbReference type="EMBL" id="AL161550">
    <property type="protein sequence ID" value="CAB78908.1"/>
    <property type="molecule type" value="Genomic_DNA"/>
</dbReference>
<dbReference type="EMBL" id="CP002687">
    <property type="protein sequence ID" value="AEE84135.1"/>
    <property type="molecule type" value="Genomic_DNA"/>
</dbReference>
<dbReference type="EMBL" id="BT003952">
    <property type="protein sequence ID" value="AAO41997.1"/>
    <property type="molecule type" value="mRNA"/>
</dbReference>
<dbReference type="PIR" id="T04427">
    <property type="entry name" value="T04427"/>
</dbReference>
<dbReference type="RefSeq" id="NP_193641.1">
    <property type="nucleotide sequence ID" value="NM_118024.2"/>
</dbReference>
<dbReference type="SMR" id="Q84WD3"/>
<dbReference type="FunCoup" id="Q84WD3">
    <property type="interactions" value="192"/>
</dbReference>
<dbReference type="STRING" id="3702.Q84WD3"/>
<dbReference type="PaxDb" id="3702-AT4G19060.1"/>
<dbReference type="ProteomicsDB" id="224323"/>
<dbReference type="EnsemblPlants" id="AT4G19060.1">
    <property type="protein sequence ID" value="AT4G19060.1"/>
    <property type="gene ID" value="AT4G19060"/>
</dbReference>
<dbReference type="GeneID" id="827644"/>
<dbReference type="Gramene" id="AT4G19060.1">
    <property type="protein sequence ID" value="AT4G19060.1"/>
    <property type="gene ID" value="AT4G19060"/>
</dbReference>
<dbReference type="KEGG" id="ath:AT4G19060"/>
<dbReference type="Araport" id="AT4G19060"/>
<dbReference type="TAIR" id="AT4G19060"/>
<dbReference type="eggNOG" id="ENOG502RPBY">
    <property type="taxonomic scope" value="Eukaryota"/>
</dbReference>
<dbReference type="HOGENOM" id="CLU_740453_0_0_1"/>
<dbReference type="InParanoid" id="Q84WD3"/>
<dbReference type="OMA" id="YLPRIWV"/>
<dbReference type="PhylomeDB" id="Q84WD3"/>
<dbReference type="PRO" id="PR:Q84WD3"/>
<dbReference type="Proteomes" id="UP000006548">
    <property type="component" value="Chromosome 4"/>
</dbReference>
<dbReference type="ExpressionAtlas" id="Q84WD3">
    <property type="expression patterns" value="baseline and differential"/>
</dbReference>
<dbReference type="GO" id="GO:0043531">
    <property type="term" value="F:ADP binding"/>
    <property type="evidence" value="ECO:0007669"/>
    <property type="project" value="InterPro"/>
</dbReference>
<dbReference type="GO" id="GO:0005524">
    <property type="term" value="F:ATP binding"/>
    <property type="evidence" value="ECO:0007669"/>
    <property type="project" value="UniProtKB-KW"/>
</dbReference>
<dbReference type="GO" id="GO:0006952">
    <property type="term" value="P:defense response"/>
    <property type="evidence" value="ECO:0007669"/>
    <property type="project" value="UniProtKB-KW"/>
</dbReference>
<dbReference type="CDD" id="cd00882">
    <property type="entry name" value="Ras_like_GTPase"/>
    <property type="match status" value="1"/>
</dbReference>
<dbReference type="Gene3D" id="3.40.50.300">
    <property type="entry name" value="P-loop containing nucleotide triphosphate hydrolases"/>
    <property type="match status" value="1"/>
</dbReference>
<dbReference type="InterPro" id="IPR044974">
    <property type="entry name" value="Disease_R_plants"/>
</dbReference>
<dbReference type="InterPro" id="IPR002182">
    <property type="entry name" value="NB-ARC"/>
</dbReference>
<dbReference type="InterPro" id="IPR027417">
    <property type="entry name" value="P-loop_NTPase"/>
</dbReference>
<dbReference type="PANTHER" id="PTHR23155">
    <property type="entry name" value="DISEASE RESISTANCE PROTEIN RP"/>
    <property type="match status" value="1"/>
</dbReference>
<dbReference type="PANTHER" id="PTHR23155:SF1205">
    <property type="entry name" value="DISEASE RESISTANCE PROTEIN RPM1"/>
    <property type="match status" value="1"/>
</dbReference>
<dbReference type="Pfam" id="PF00931">
    <property type="entry name" value="NB-ARC"/>
    <property type="match status" value="1"/>
</dbReference>
<dbReference type="SUPFAM" id="SSF52540">
    <property type="entry name" value="P-loop containing nucleoside triphosphate hydrolases"/>
    <property type="match status" value="1"/>
</dbReference>
<comment type="function">
    <text evidence="1">Possible disease resistance protein.</text>
</comment>
<comment type="caution">
    <text evidence="4">Although strongly related to the NB-LRR family, it is shorter and lacks the LRR repeats that are present in other proteins of the family.</text>
</comment>
<comment type="online information" name="NIB-LRRS">
    <link uri="http://niblrrs.ucdavis.edu"/>
    <text>Functional and comparative genomics of disease resistance gene homologs</text>
</comment>
<evidence type="ECO:0000250" key="1"/>
<evidence type="ECO:0000255" key="2"/>
<evidence type="ECO:0000256" key="3">
    <source>
        <dbReference type="SAM" id="MobiDB-lite"/>
    </source>
</evidence>
<evidence type="ECO:0000305" key="4"/>
<protein>
    <recommendedName>
        <fullName>Probable disease resistance protein At4g19060</fullName>
    </recommendedName>
</protein>
<gene>
    <name type="ordered locus">At4g19060</name>
    <name type="ORF">F13C5.240</name>
    <name type="ORF">T18B16.2</name>
</gene>
<name>DRL26_ARATH</name>
<feature type="chain" id="PRO_0000212758" description="Probable disease resistance protein At4g19060">
    <location>
        <begin position="1"/>
        <end position="383"/>
    </location>
</feature>
<feature type="domain" description="NB-ARC 1">
    <location>
        <begin position="75"/>
        <end position="184"/>
    </location>
</feature>
<feature type="domain" description="NB-ARC 2">
    <location>
        <begin position="207"/>
        <end position="281"/>
    </location>
</feature>
<feature type="region of interest" description="Disordered" evidence="3">
    <location>
        <begin position="36"/>
        <end position="84"/>
    </location>
</feature>
<feature type="compositionally biased region" description="Polar residues" evidence="3">
    <location>
        <begin position="41"/>
        <end position="70"/>
    </location>
</feature>
<feature type="binding site" evidence="2">
    <location>
        <begin position="121"/>
        <end position="128"/>
    </location>
    <ligand>
        <name>ATP</name>
        <dbReference type="ChEBI" id="CHEBI:30616"/>
    </ligand>
</feature>
<feature type="sequence conflict" description="In Ref. 3; AAO41997." evidence="4" ref="3">
    <original>E</original>
    <variation>D</variation>
    <location>
        <position position="348"/>
    </location>
</feature>
<organism>
    <name type="scientific">Arabidopsis thaliana</name>
    <name type="common">Mouse-ear cress</name>
    <dbReference type="NCBI Taxonomy" id="3702"/>
    <lineage>
        <taxon>Eukaryota</taxon>
        <taxon>Viridiplantae</taxon>
        <taxon>Streptophyta</taxon>
        <taxon>Embryophyta</taxon>
        <taxon>Tracheophyta</taxon>
        <taxon>Spermatophyta</taxon>
        <taxon>Magnoliopsida</taxon>
        <taxon>eudicotyledons</taxon>
        <taxon>Gunneridae</taxon>
        <taxon>Pentapetalae</taxon>
        <taxon>rosids</taxon>
        <taxon>malvids</taxon>
        <taxon>Brassicales</taxon>
        <taxon>Brassicaceae</taxon>
        <taxon>Camelineae</taxon>
        <taxon>Arabidopsis</taxon>
    </lineage>
</organism>
<proteinExistence type="evidence at transcript level"/>